<sequence length="357" mass="40875">MLLFAHLLQLLVSATVPTQSSPHSLRYFTTAVSRPGLGEPRFIIVGYVDDTQFVRFDSDAENPRMEPRARWIEQEGPEYWERETWKARDMGRNFRVNLRTLLGYYNQSNDESHTLQWMYGCDVGPDGRLLRGYCQEAYDGQDYISLNEDLRSWTANDIASQISKHKSEAVDEAHQQRAYLQGPCVEWLHRYLRLGNETLQRSDPPKAHVTHHPRSEDEVTLRCWALGFYPADITLTWQLNGEELTQDMELVETRPAGDGTFQKWAAVVVPLGKEQYYTCHVYHEGLPEPLTLRWEPPPSTVSNMVIIAVLVVLGAVIILGAVVAFVMKRRRHIGVKGCYAHVLGSKSFQTSDWPQKA</sequence>
<comment type="function">
    <text>Involved in the presentation of foreign antigens to the immune system.</text>
</comment>
<comment type="subunit">
    <text>Heterodimer of an alpha chain and a beta chain (beta-2-microglobulin).</text>
</comment>
<comment type="subcellular location">
    <subcellularLocation>
        <location>Membrane</location>
        <topology>Single-pass type I membrane protein</topology>
    </subcellularLocation>
</comment>
<comment type="similarity">
    <text evidence="3">Belongs to the MHC class I family.</text>
</comment>
<name>HA15_MOUSE</name>
<dbReference type="EMBL" id="M11284">
    <property type="protein sequence ID" value="AAA39693.1"/>
    <property type="molecule type" value="mRNA"/>
</dbReference>
<dbReference type="EMBL" id="Y00629">
    <property type="protein sequence ID" value="CAA68665.1"/>
    <property type="molecule type" value="Genomic_DNA"/>
</dbReference>
<dbReference type="CCDS" id="CCDS28715.1"/>
<dbReference type="PIR" id="A02205">
    <property type="entry name" value="HLMS37"/>
</dbReference>
<dbReference type="RefSeq" id="NP_034528.1">
    <property type="nucleotide sequence ID" value="NM_010398.3"/>
</dbReference>
<dbReference type="PDB" id="3VJ6">
    <property type="method" value="X-ray"/>
    <property type="resolution" value="1.90 A"/>
    <property type="chains" value="A=21-297"/>
</dbReference>
<dbReference type="PDB" id="8UMO">
    <property type="method" value="X-ray"/>
    <property type="resolution" value="2.60 A"/>
    <property type="chains" value="A=21-298"/>
</dbReference>
<dbReference type="PDBsum" id="3VJ6"/>
<dbReference type="PDBsum" id="8UMO"/>
<dbReference type="SMR" id="P06339"/>
<dbReference type="BioGRID" id="200189">
    <property type="interactions" value="2"/>
</dbReference>
<dbReference type="FunCoup" id="P06339">
    <property type="interactions" value="762"/>
</dbReference>
<dbReference type="IntAct" id="P06339">
    <property type="interactions" value="1"/>
</dbReference>
<dbReference type="STRING" id="10090.ENSMUSP00000099739"/>
<dbReference type="GlyCosmos" id="P06339">
    <property type="glycosylation" value="2 sites, No reported glycans"/>
</dbReference>
<dbReference type="GlyGen" id="P06339">
    <property type="glycosylation" value="2 sites, 1 N-linked glycan (1 site)"/>
</dbReference>
<dbReference type="iPTMnet" id="P06339"/>
<dbReference type="PhosphoSitePlus" id="P06339"/>
<dbReference type="jPOST" id="P06339"/>
<dbReference type="PaxDb" id="10090-ENSMUSP00000099739"/>
<dbReference type="ProteomicsDB" id="269673"/>
<dbReference type="DNASU" id="15040"/>
<dbReference type="Ensembl" id="ENSMUST00000102678.5">
    <property type="protein sequence ID" value="ENSMUSP00000099739.5"/>
    <property type="gene ID" value="ENSMUSG00000067212.9"/>
</dbReference>
<dbReference type="GeneID" id="15040"/>
<dbReference type="KEGG" id="mmu:15040"/>
<dbReference type="UCSC" id="uc008cjr.1">
    <property type="organism name" value="mouse"/>
</dbReference>
<dbReference type="AGR" id="MGI:95957"/>
<dbReference type="CTD" id="15040"/>
<dbReference type="MGI" id="MGI:95957">
    <property type="gene designation" value="H2-T23"/>
</dbReference>
<dbReference type="VEuPathDB" id="HostDB:ENSMUSG00000067212"/>
<dbReference type="eggNOG" id="ENOG502RQEK">
    <property type="taxonomic scope" value="Eukaryota"/>
</dbReference>
<dbReference type="GeneTree" id="ENSGT01120000271826"/>
<dbReference type="HOGENOM" id="CLU_047501_1_1_1"/>
<dbReference type="InParanoid" id="P06339"/>
<dbReference type="OMA" id="WIEQEEP"/>
<dbReference type="OrthoDB" id="77324at9989"/>
<dbReference type="PhylomeDB" id="P06339"/>
<dbReference type="TreeFam" id="TF336617"/>
<dbReference type="Reactome" id="R-MMU-1236974">
    <property type="pathway name" value="ER-Phagosome pathway"/>
</dbReference>
<dbReference type="Reactome" id="R-MMU-1236977">
    <property type="pathway name" value="Endosomal/Vacuolar pathway"/>
</dbReference>
<dbReference type="Reactome" id="R-MMU-198933">
    <property type="pathway name" value="Immunoregulatory interactions between a Lymphoid and a non-Lymphoid cell"/>
</dbReference>
<dbReference type="Reactome" id="R-MMU-2172127">
    <property type="pathway name" value="DAP12 interactions"/>
</dbReference>
<dbReference type="Reactome" id="R-MMU-6798695">
    <property type="pathway name" value="Neutrophil degranulation"/>
</dbReference>
<dbReference type="Reactome" id="R-MMU-983170">
    <property type="pathway name" value="Antigen Presentation: Folding, assembly and peptide loading of class I MHC"/>
</dbReference>
<dbReference type="BioGRID-ORCS" id="15040">
    <property type="hits" value="8 hits in 80 CRISPR screens"/>
</dbReference>
<dbReference type="ChiTaRS" id="H2-T23">
    <property type="organism name" value="mouse"/>
</dbReference>
<dbReference type="EvolutionaryTrace" id="P06339"/>
<dbReference type="PRO" id="PR:P06339"/>
<dbReference type="Proteomes" id="UP000000589">
    <property type="component" value="Chromosome 17"/>
</dbReference>
<dbReference type="RNAct" id="P06339">
    <property type="molecule type" value="protein"/>
</dbReference>
<dbReference type="Bgee" id="ENSMUSG00000067212">
    <property type="expression patterns" value="Expressed in granulocyte and 63 other cell types or tissues"/>
</dbReference>
<dbReference type="ExpressionAtlas" id="P06339">
    <property type="expression patterns" value="baseline and differential"/>
</dbReference>
<dbReference type="GO" id="GO:0098553">
    <property type="term" value="C:lumenal side of endoplasmic reticulum membrane"/>
    <property type="evidence" value="ECO:0000304"/>
    <property type="project" value="Reactome"/>
</dbReference>
<dbReference type="GO" id="GO:0042612">
    <property type="term" value="C:MHC class I protein complex"/>
    <property type="evidence" value="ECO:0007669"/>
    <property type="project" value="UniProtKB-KW"/>
</dbReference>
<dbReference type="GO" id="GO:0030670">
    <property type="term" value="C:phagocytic vesicle membrane"/>
    <property type="evidence" value="ECO:0000304"/>
    <property type="project" value="Reactome"/>
</dbReference>
<dbReference type="GO" id="GO:0002489">
    <property type="term" value="P:antigen processing and presentation of endogenous peptide antigen via MHC class Ib via ER pathway, TAP-dependent"/>
    <property type="evidence" value="ECO:0000314"/>
    <property type="project" value="MGI"/>
</dbReference>
<dbReference type="GO" id="GO:0002474">
    <property type="term" value="P:antigen processing and presentation of peptide antigen via MHC class I"/>
    <property type="evidence" value="ECO:0007669"/>
    <property type="project" value="UniProtKB-KW"/>
</dbReference>
<dbReference type="GO" id="GO:0048839">
    <property type="term" value="P:inner ear development"/>
    <property type="evidence" value="ECO:0000314"/>
    <property type="project" value="MGI"/>
</dbReference>
<dbReference type="GO" id="GO:0001916">
    <property type="term" value="P:positive regulation of T cell mediated cytotoxicity"/>
    <property type="evidence" value="ECO:0000314"/>
    <property type="project" value="MGI"/>
</dbReference>
<dbReference type="GO" id="GO:0001913">
    <property type="term" value="P:T cell mediated cytotoxicity"/>
    <property type="evidence" value="ECO:0000314"/>
    <property type="project" value="MGI"/>
</dbReference>
<dbReference type="CDD" id="cd21820">
    <property type="entry name" value="IgC1_MHC_1b_Qa-1b"/>
    <property type="match status" value="1"/>
</dbReference>
<dbReference type="CDD" id="cd12087">
    <property type="entry name" value="TM_EGFR-like"/>
    <property type="match status" value="1"/>
</dbReference>
<dbReference type="FunFam" id="2.60.40.10:FF:000014">
    <property type="entry name" value="H-2 class I histocompatibility antigen, alpha chain"/>
    <property type="match status" value="1"/>
</dbReference>
<dbReference type="FunFam" id="3.30.500.10:FF:000001">
    <property type="entry name" value="H-2 class I histocompatibility antigen, alpha chain"/>
    <property type="match status" value="1"/>
</dbReference>
<dbReference type="Gene3D" id="2.60.40.10">
    <property type="entry name" value="Immunoglobulins"/>
    <property type="match status" value="1"/>
</dbReference>
<dbReference type="Gene3D" id="3.30.500.10">
    <property type="entry name" value="MHC class I-like antigen recognition-like"/>
    <property type="match status" value="1"/>
</dbReference>
<dbReference type="InterPro" id="IPR007110">
    <property type="entry name" value="Ig-like_dom"/>
</dbReference>
<dbReference type="InterPro" id="IPR036179">
    <property type="entry name" value="Ig-like_dom_sf"/>
</dbReference>
<dbReference type="InterPro" id="IPR013783">
    <property type="entry name" value="Ig-like_fold"/>
</dbReference>
<dbReference type="InterPro" id="IPR003006">
    <property type="entry name" value="Ig/MHC_CS"/>
</dbReference>
<dbReference type="InterPro" id="IPR003597">
    <property type="entry name" value="Ig_C1-set"/>
</dbReference>
<dbReference type="InterPro" id="IPR050208">
    <property type="entry name" value="MHC_class-I_related"/>
</dbReference>
<dbReference type="InterPro" id="IPR011161">
    <property type="entry name" value="MHC_I-like_Ag-recog"/>
</dbReference>
<dbReference type="InterPro" id="IPR037055">
    <property type="entry name" value="MHC_I-like_Ag-recog_sf"/>
</dbReference>
<dbReference type="InterPro" id="IPR011162">
    <property type="entry name" value="MHC_I/II-like_Ag-recog"/>
</dbReference>
<dbReference type="InterPro" id="IPR001039">
    <property type="entry name" value="MHC_I_a_a1/a2"/>
</dbReference>
<dbReference type="PANTHER" id="PTHR16675:SF244">
    <property type="entry name" value="H-2 CLASS I HISTOCOMPATIBILITY ANTIGEN, D-37 ALPHA CHAIN"/>
    <property type="match status" value="1"/>
</dbReference>
<dbReference type="PANTHER" id="PTHR16675">
    <property type="entry name" value="MHC CLASS I-RELATED"/>
    <property type="match status" value="1"/>
</dbReference>
<dbReference type="Pfam" id="PF07654">
    <property type="entry name" value="C1-set"/>
    <property type="match status" value="1"/>
</dbReference>
<dbReference type="Pfam" id="PF00129">
    <property type="entry name" value="MHC_I"/>
    <property type="match status" value="1"/>
</dbReference>
<dbReference type="PRINTS" id="PR01638">
    <property type="entry name" value="MHCCLASSI"/>
</dbReference>
<dbReference type="SMART" id="SM00407">
    <property type="entry name" value="IGc1"/>
    <property type="match status" value="1"/>
</dbReference>
<dbReference type="SUPFAM" id="SSF48726">
    <property type="entry name" value="Immunoglobulin"/>
    <property type="match status" value="1"/>
</dbReference>
<dbReference type="SUPFAM" id="SSF54452">
    <property type="entry name" value="MHC antigen-recognition domain"/>
    <property type="match status" value="1"/>
</dbReference>
<dbReference type="PROSITE" id="PS50835">
    <property type="entry name" value="IG_LIKE"/>
    <property type="match status" value="1"/>
</dbReference>
<dbReference type="PROSITE" id="PS00290">
    <property type="entry name" value="IG_MHC"/>
    <property type="match status" value="1"/>
</dbReference>
<protein>
    <recommendedName>
        <fullName>H-2 class I histocompatibility antigen, D-37 alpha chain</fullName>
    </recommendedName>
</protein>
<organism>
    <name type="scientific">Mus musculus</name>
    <name type="common">Mouse</name>
    <dbReference type="NCBI Taxonomy" id="10090"/>
    <lineage>
        <taxon>Eukaryota</taxon>
        <taxon>Metazoa</taxon>
        <taxon>Chordata</taxon>
        <taxon>Craniata</taxon>
        <taxon>Vertebrata</taxon>
        <taxon>Euteleostomi</taxon>
        <taxon>Mammalia</taxon>
        <taxon>Eutheria</taxon>
        <taxon>Euarchontoglires</taxon>
        <taxon>Glires</taxon>
        <taxon>Rodentia</taxon>
        <taxon>Myomorpha</taxon>
        <taxon>Muroidea</taxon>
        <taxon>Muridae</taxon>
        <taxon>Murinae</taxon>
        <taxon>Mus</taxon>
        <taxon>Mus</taxon>
    </lineage>
</organism>
<gene>
    <name type="primary">H2-T23</name>
</gene>
<evidence type="ECO:0000255" key="1"/>
<evidence type="ECO:0000255" key="2">
    <source>
        <dbReference type="PROSITE-ProRule" id="PRU00114"/>
    </source>
</evidence>
<evidence type="ECO:0000305" key="3"/>
<evidence type="ECO:0007744" key="4">
    <source>
    </source>
</evidence>
<evidence type="ECO:0007829" key="5">
    <source>
        <dbReference type="PDB" id="3VJ6"/>
    </source>
</evidence>
<evidence type="ECO:0007829" key="6">
    <source>
        <dbReference type="PDB" id="8UMO"/>
    </source>
</evidence>
<reference key="1">
    <citation type="journal article" date="1985" name="Cell">
        <title>Expression of class I genes in the major histocompatibility complex: identification of eight distinct mRNAs in DBA/2 mouse liver.</title>
        <authorList>
            <person name="Lalanne J.-L."/>
            <person name="Transy C."/>
            <person name="Guerin S."/>
            <person name="Darche S."/>
            <person name="Meulien P."/>
            <person name="Kourilsky P."/>
        </authorList>
    </citation>
    <scope>NUCLEOTIDE SEQUENCE [MRNA]</scope>
    <source>
        <strain>DBA/2J</strain>
    </source>
</reference>
<reference key="2">
    <citation type="journal article" date="1987" name="J. Exp. Med.">
        <title>A low polymorphic mouse H-2 class I gene from the Tla complex is expressed in a broad variety of cell types.</title>
        <authorList>
            <person name="Transy C."/>
            <person name="Nash S.R."/>
            <person name="David-Watine B."/>
            <person name="Cochet M."/>
            <person name="Hunt S.W. III"/>
            <person name="Hood L.E."/>
            <person name="Kourilsky P."/>
        </authorList>
    </citation>
    <scope>NUCLEOTIDE SEQUENCE [GENOMIC DNA]</scope>
    <source>
        <strain>BALB/cJ</strain>
        <tissue>Sperm</tissue>
    </source>
</reference>
<reference key="3">
    <citation type="journal article" date="2009" name="Immunity">
        <title>The phagosomal proteome in interferon-gamma-activated macrophages.</title>
        <authorList>
            <person name="Trost M."/>
            <person name="English L."/>
            <person name="Lemieux S."/>
            <person name="Courcelles M."/>
            <person name="Desjardins M."/>
            <person name="Thibault P."/>
        </authorList>
    </citation>
    <scope>PHOSPHORYLATION [LARGE SCALE ANALYSIS] AT SER-347</scope>
    <scope>IDENTIFICATION BY MASS SPECTROMETRY [LARGE SCALE ANALYSIS]</scope>
</reference>
<proteinExistence type="evidence at protein level"/>
<feature type="signal peptide" evidence="1">
    <location>
        <begin position="1"/>
        <end position="20"/>
    </location>
</feature>
<feature type="chain" id="PRO_0000018927" description="H-2 class I histocompatibility antigen, D-37 alpha chain">
    <location>
        <begin position="21"/>
        <end position="357"/>
    </location>
</feature>
<feature type="topological domain" description="Extracellular" evidence="1">
    <location>
        <begin position="21"/>
        <end position="304"/>
    </location>
</feature>
<feature type="transmembrane region" description="Helical" evidence="1">
    <location>
        <begin position="305"/>
        <end position="327"/>
    </location>
</feature>
<feature type="topological domain" description="Cytoplasmic" evidence="1">
    <location>
        <begin position="328"/>
        <end position="357"/>
    </location>
</feature>
<feature type="domain" description="Ig-like C1-type">
    <location>
        <begin position="205"/>
        <end position="293"/>
    </location>
</feature>
<feature type="region of interest" description="Alpha-1">
    <location>
        <begin position="21"/>
        <end position="110"/>
    </location>
</feature>
<feature type="region of interest" description="Alpha-2">
    <location>
        <begin position="111"/>
        <end position="202"/>
    </location>
</feature>
<feature type="region of interest" description="Alpha-3">
    <location>
        <begin position="203"/>
        <end position="294"/>
    </location>
</feature>
<feature type="region of interest" description="Connecting peptide">
    <location>
        <begin position="295"/>
        <end position="304"/>
    </location>
</feature>
<feature type="modified residue" description="Phosphoserine" evidence="4">
    <location>
        <position position="347"/>
    </location>
</feature>
<feature type="glycosylation site" description="N-linked (GlcNAc...) asparagine" evidence="1">
    <location>
        <position position="106"/>
    </location>
</feature>
<feature type="glycosylation site" description="N-linked (GlcNAc...) asparagine" evidence="1">
    <location>
        <position position="196"/>
    </location>
</feature>
<feature type="disulfide bond" evidence="2">
    <location>
        <begin position="121"/>
        <end position="184"/>
    </location>
</feature>
<feature type="disulfide bond" evidence="2">
    <location>
        <begin position="223"/>
        <end position="279"/>
    </location>
</feature>
<feature type="strand" evidence="5">
    <location>
        <begin position="23"/>
        <end position="32"/>
    </location>
</feature>
<feature type="strand" evidence="6">
    <location>
        <begin position="35"/>
        <end position="39"/>
    </location>
</feature>
<feature type="strand" evidence="5">
    <location>
        <begin position="41"/>
        <end position="48"/>
    </location>
</feature>
<feature type="strand" evidence="5">
    <location>
        <begin position="51"/>
        <end position="57"/>
    </location>
</feature>
<feature type="strand" evidence="5">
    <location>
        <begin position="60"/>
        <end position="62"/>
    </location>
</feature>
<feature type="strand" evidence="5">
    <location>
        <begin position="66"/>
        <end position="69"/>
    </location>
</feature>
<feature type="helix" evidence="5">
    <location>
        <begin position="70"/>
        <end position="74"/>
    </location>
</feature>
<feature type="helix" evidence="5">
    <location>
        <begin position="77"/>
        <end position="105"/>
    </location>
</feature>
<feature type="strand" evidence="5">
    <location>
        <begin position="114"/>
        <end position="123"/>
    </location>
</feature>
<feature type="strand" evidence="5">
    <location>
        <begin position="129"/>
        <end position="138"/>
    </location>
</feature>
<feature type="strand" evidence="5">
    <location>
        <begin position="141"/>
        <end position="146"/>
    </location>
</feature>
<feature type="strand" evidence="5">
    <location>
        <begin position="153"/>
        <end position="155"/>
    </location>
</feature>
<feature type="helix" evidence="5">
    <location>
        <begin position="158"/>
        <end position="169"/>
    </location>
</feature>
<feature type="helix" evidence="5">
    <location>
        <begin position="172"/>
        <end position="181"/>
    </location>
</feature>
<feature type="helix" evidence="5">
    <location>
        <begin position="183"/>
        <end position="194"/>
    </location>
</feature>
<feature type="helix" evidence="5">
    <location>
        <begin position="196"/>
        <end position="199"/>
    </location>
</feature>
<feature type="strand" evidence="5">
    <location>
        <begin position="206"/>
        <end position="215"/>
    </location>
</feature>
<feature type="strand" evidence="5">
    <location>
        <begin position="218"/>
        <end position="231"/>
    </location>
</feature>
<feature type="strand" evidence="5">
    <location>
        <begin position="234"/>
        <end position="239"/>
    </location>
</feature>
<feature type="strand" evidence="5">
    <location>
        <begin position="257"/>
        <end position="259"/>
    </location>
</feature>
<feature type="strand" evidence="5">
    <location>
        <begin position="261"/>
        <end position="270"/>
    </location>
</feature>
<feature type="helix" evidence="5">
    <location>
        <begin position="274"/>
        <end position="276"/>
    </location>
</feature>
<feature type="strand" evidence="5">
    <location>
        <begin position="277"/>
        <end position="282"/>
    </location>
</feature>
<feature type="strand" evidence="5">
    <location>
        <begin position="290"/>
        <end position="292"/>
    </location>
</feature>
<accession>P06339</accession>
<keyword id="KW-0002">3D-structure</keyword>
<keyword id="KW-1015">Disulfide bond</keyword>
<keyword id="KW-0325">Glycoprotein</keyword>
<keyword id="KW-0391">Immunity</keyword>
<keyword id="KW-0472">Membrane</keyword>
<keyword id="KW-0490">MHC I</keyword>
<keyword id="KW-0597">Phosphoprotein</keyword>
<keyword id="KW-1185">Reference proteome</keyword>
<keyword id="KW-0732">Signal</keyword>
<keyword id="KW-0812">Transmembrane</keyword>
<keyword id="KW-1133">Transmembrane helix</keyword>